<proteinExistence type="inferred from homology"/>
<reference key="1">
    <citation type="journal article" date="2006" name="Proc. Natl. Acad. Sci. U.S.A.">
        <title>Burkholderia xenovorans LB400 harbors a multi-replicon, 9.73-Mbp genome shaped for versatility.</title>
        <authorList>
            <person name="Chain P.S.G."/>
            <person name="Denef V.J."/>
            <person name="Konstantinidis K.T."/>
            <person name="Vergez L.M."/>
            <person name="Agullo L."/>
            <person name="Reyes V.L."/>
            <person name="Hauser L."/>
            <person name="Cordova M."/>
            <person name="Gomez L."/>
            <person name="Gonzalez M."/>
            <person name="Land M."/>
            <person name="Lao V."/>
            <person name="Larimer F."/>
            <person name="LiPuma J.J."/>
            <person name="Mahenthiralingam E."/>
            <person name="Malfatti S.A."/>
            <person name="Marx C.J."/>
            <person name="Parnell J.J."/>
            <person name="Ramette A."/>
            <person name="Richardson P."/>
            <person name="Seeger M."/>
            <person name="Smith D."/>
            <person name="Spilker T."/>
            <person name="Sul W.J."/>
            <person name="Tsoi T.V."/>
            <person name="Ulrich L.E."/>
            <person name="Zhulin I.B."/>
            <person name="Tiedje J.M."/>
        </authorList>
    </citation>
    <scope>NUCLEOTIDE SEQUENCE [LARGE SCALE GENOMIC DNA]</scope>
    <source>
        <strain>LB400</strain>
    </source>
</reference>
<protein>
    <recommendedName>
        <fullName evidence="1">Small ribosomal subunit protein uS8</fullName>
    </recommendedName>
    <alternativeName>
        <fullName evidence="2">30S ribosomal protein S8</fullName>
    </alternativeName>
</protein>
<accession>Q13TI4</accession>
<dbReference type="EMBL" id="CP000270">
    <property type="protein sequence ID" value="ABE32605.1"/>
    <property type="molecule type" value="Genomic_DNA"/>
</dbReference>
<dbReference type="RefSeq" id="WP_006052216.1">
    <property type="nucleotide sequence ID" value="NZ_CP008760.1"/>
</dbReference>
<dbReference type="SMR" id="Q13TI4"/>
<dbReference type="STRING" id="266265.Bxe_A0328"/>
<dbReference type="GeneID" id="97311006"/>
<dbReference type="KEGG" id="bxb:DR64_2498"/>
<dbReference type="KEGG" id="bxe:Bxe_A0328"/>
<dbReference type="eggNOG" id="COG0096">
    <property type="taxonomic scope" value="Bacteria"/>
</dbReference>
<dbReference type="OrthoDB" id="9802617at2"/>
<dbReference type="Proteomes" id="UP000001817">
    <property type="component" value="Chromosome 1"/>
</dbReference>
<dbReference type="GO" id="GO:1990904">
    <property type="term" value="C:ribonucleoprotein complex"/>
    <property type="evidence" value="ECO:0007669"/>
    <property type="project" value="UniProtKB-KW"/>
</dbReference>
<dbReference type="GO" id="GO:0005840">
    <property type="term" value="C:ribosome"/>
    <property type="evidence" value="ECO:0007669"/>
    <property type="project" value="UniProtKB-KW"/>
</dbReference>
<dbReference type="GO" id="GO:0019843">
    <property type="term" value="F:rRNA binding"/>
    <property type="evidence" value="ECO:0007669"/>
    <property type="project" value="UniProtKB-UniRule"/>
</dbReference>
<dbReference type="GO" id="GO:0003735">
    <property type="term" value="F:structural constituent of ribosome"/>
    <property type="evidence" value="ECO:0007669"/>
    <property type="project" value="InterPro"/>
</dbReference>
<dbReference type="GO" id="GO:0006412">
    <property type="term" value="P:translation"/>
    <property type="evidence" value="ECO:0007669"/>
    <property type="project" value="UniProtKB-UniRule"/>
</dbReference>
<dbReference type="FunFam" id="3.30.1370.30:FF:000003">
    <property type="entry name" value="30S ribosomal protein S8"/>
    <property type="match status" value="1"/>
</dbReference>
<dbReference type="FunFam" id="3.30.1490.10:FF:000001">
    <property type="entry name" value="30S ribosomal protein S8"/>
    <property type="match status" value="1"/>
</dbReference>
<dbReference type="Gene3D" id="3.30.1370.30">
    <property type="match status" value="1"/>
</dbReference>
<dbReference type="Gene3D" id="3.30.1490.10">
    <property type="match status" value="1"/>
</dbReference>
<dbReference type="HAMAP" id="MF_01302_B">
    <property type="entry name" value="Ribosomal_uS8_B"/>
    <property type="match status" value="1"/>
</dbReference>
<dbReference type="InterPro" id="IPR000630">
    <property type="entry name" value="Ribosomal_uS8"/>
</dbReference>
<dbReference type="InterPro" id="IPR047863">
    <property type="entry name" value="Ribosomal_uS8_CS"/>
</dbReference>
<dbReference type="InterPro" id="IPR035987">
    <property type="entry name" value="Ribosomal_uS8_sf"/>
</dbReference>
<dbReference type="NCBIfam" id="NF001109">
    <property type="entry name" value="PRK00136.1"/>
    <property type="match status" value="1"/>
</dbReference>
<dbReference type="PANTHER" id="PTHR11758">
    <property type="entry name" value="40S RIBOSOMAL PROTEIN S15A"/>
    <property type="match status" value="1"/>
</dbReference>
<dbReference type="Pfam" id="PF00410">
    <property type="entry name" value="Ribosomal_S8"/>
    <property type="match status" value="1"/>
</dbReference>
<dbReference type="SUPFAM" id="SSF56047">
    <property type="entry name" value="Ribosomal protein S8"/>
    <property type="match status" value="1"/>
</dbReference>
<dbReference type="PROSITE" id="PS00053">
    <property type="entry name" value="RIBOSOMAL_S8"/>
    <property type="match status" value="1"/>
</dbReference>
<keyword id="KW-1185">Reference proteome</keyword>
<keyword id="KW-0687">Ribonucleoprotein</keyword>
<keyword id="KW-0689">Ribosomal protein</keyword>
<keyword id="KW-0694">RNA-binding</keyword>
<keyword id="KW-0699">rRNA-binding</keyword>
<sequence>MSMSDPIADMLTRIRNAQMVEKVSVTMPSSKVKVAIAQVLKDEGYIDDFAVKSEGAKSELNIVLKYYAGRPVIERIERVSKPGLRVYRGRNDIPVVMNGLGVAIVSTPKGVMTDRKARATGVGGEVICYVA</sequence>
<evidence type="ECO:0000255" key="1">
    <source>
        <dbReference type="HAMAP-Rule" id="MF_01302"/>
    </source>
</evidence>
<evidence type="ECO:0000305" key="2"/>
<name>RS8_PARXL</name>
<feature type="chain" id="PRO_0000290815" description="Small ribosomal subunit protein uS8">
    <location>
        <begin position="1"/>
        <end position="131"/>
    </location>
</feature>
<comment type="function">
    <text evidence="1">One of the primary rRNA binding proteins, it binds directly to 16S rRNA central domain where it helps coordinate assembly of the platform of the 30S subunit.</text>
</comment>
<comment type="subunit">
    <text evidence="1">Part of the 30S ribosomal subunit. Contacts proteins S5 and S12.</text>
</comment>
<comment type="similarity">
    <text evidence="1">Belongs to the universal ribosomal protein uS8 family.</text>
</comment>
<organism>
    <name type="scientific">Paraburkholderia xenovorans (strain LB400)</name>
    <dbReference type="NCBI Taxonomy" id="266265"/>
    <lineage>
        <taxon>Bacteria</taxon>
        <taxon>Pseudomonadati</taxon>
        <taxon>Pseudomonadota</taxon>
        <taxon>Betaproteobacteria</taxon>
        <taxon>Burkholderiales</taxon>
        <taxon>Burkholderiaceae</taxon>
        <taxon>Paraburkholderia</taxon>
    </lineage>
</organism>
<gene>
    <name evidence="1" type="primary">rpsH</name>
    <name type="ordered locus">Bxeno_A4067</name>
    <name type="ORF">Bxe_A0328</name>
</gene>